<gene>
    <name evidence="6" type="primary">levG</name>
    <name evidence="6" type="synonym">ftf</name>
</gene>
<sequence>MLENKKHKKMSLSGKSLLMGTLSTAAIVLSASTVNAATNTDTVDNANASQVTTVKASASVNKNDNSGLKENATNDKVAGTETNLNSSLNSGKETSSQVNDSKEDSSSTQVGSTPISSAIINNGKASSDLNQDSDNISDHFKDNNSQGQSSTSSEKTELKGKIKEIVNNSGIDVTKLTNDQINNLNKVNFDNDPQDGTKLTLNDLDAIGQALIRRDPKYAVPYFNAKEIKNMDAAETKDAQTGKTETLEIWDSWPVQDPITGYVSNYKGYQLVIAMMGMPKKNDNHIYLLYNKYNDNEFSHWRNAGSIFGYNETPDLQEWSGSAIVNKDGSVQLFYTKNDTSNGKLNDQQLATANLKLNVDNNGVSIASVDNDHVIFIGDGKHYQTYDQFSNGKNRNRDNYTLRDPHVVEEENGDRYLVFEANTGSNNYQGEDQVYRWANYGGNDKFNVNNFLSYFGNNDDQALASVANGALGILKLSGDQNNPTVKLDDVYSPLVTSLMVSDEMERPDIVKVGNKYYLFSATRLSRGTKGEITRLANKVVGDNVAMIGFVSDSLTHGYVPLNGSGVVLTASVPANWRTATYSYYAVPIEGKENQLLITAYMTNRGEVAGKGNNSTWAPSFILQLNPDNTTTVLAKLTNQGVWVWNGDSENKNMIGSLEKDSPNSAALDGEWGKFIDWDAINSYSLKPHQPVTPNVPTTPEKPENPTTPNTPDTPRTPEVPTTPVKKTTQSELPKAGAKDGIAATILGAISSMLGVIGLAGISKRKRNN</sequence>
<comment type="function">
    <text evidence="5">Fructosyltransferase that catalyzes the polymerization of the fructose moiety of sucrose to produce levan polymer and the fructo-oligosaccharide (FOS) 1-kestose. Is also able to convert raffinose into a fructan polymer and a single oligosaccharide (most likely Gal-Glc-Frc-Frc) in vitro; however, L.gasseri strain DSM 20077 is unable to ferment raffinose. Also displays sucrose hydrolase activity.</text>
</comment>
<comment type="catalytic activity">
    <reaction evidence="5">
        <text>[6)-beta-D-fructofuranosyl-(2-&gt;](n) alpha-D-glucopyranoside + sucrose = [6)-beta-D-fructofuranosyl-(2-&gt;](n+1) alpha-D-glucopyranoside + D-glucose</text>
        <dbReference type="Rhea" id="RHEA:13653"/>
        <dbReference type="Rhea" id="RHEA-COMP:13093"/>
        <dbReference type="Rhea" id="RHEA-COMP:13094"/>
        <dbReference type="ChEBI" id="CHEBI:4167"/>
        <dbReference type="ChEBI" id="CHEBI:17992"/>
        <dbReference type="ChEBI" id="CHEBI:134464"/>
        <dbReference type="EC" id="2.4.1.10"/>
    </reaction>
</comment>
<comment type="activity regulation">
    <text evidence="1 5">Calcium ions are required for optimal activity, but do not seem to be essential since addition of EDTA causes only a 48% drop in activity (PubMed:20075040). Ca(2+) may play an important structural role and promote stability of levansucrase (By similarity).</text>
</comment>
<comment type="biophysicochemical properties">
    <phDependence>
        <text evidence="5">Optimum pH is 3.5-4.5.</text>
    </phDependence>
    <temperatureDependence>
        <text evidence="5">Optimum temperature is 55 degrees Celsius. Activity drastically decreases at 60 degrees Celsius.</text>
    </temperatureDependence>
</comment>
<comment type="subcellular location">
    <subcellularLocation>
        <location evidence="3">Secreted</location>
        <location evidence="3">Cell wall</location>
        <topology evidence="3">Peptidoglycan-anchor</topology>
    </subcellularLocation>
    <subcellularLocation>
        <location evidence="5">Cell surface</location>
    </subcellularLocation>
</comment>
<comment type="similarity">
    <text evidence="7">Belongs to the glycosyl hydrolase 68 family.</text>
</comment>
<reference key="1">
    <citation type="journal article" date="2010" name="Microbiology">
        <title>Inulin and levan synthesis by probiotic Lactobacillus gasseri strains: characterization of three novel fructansucrase enzymes and their fructan products.</title>
        <authorList>
            <person name="Anwar M.A."/>
            <person name="Kralj S."/>
            <person name="Pique A.V."/>
            <person name="Leemhuis H."/>
            <person name="van der Maarel M.J."/>
            <person name="Dijkhuizen L."/>
        </authorList>
    </citation>
    <scope>NUCLEOTIDE SEQUENCE [GENOMIC DNA]</scope>
    <scope>FUNCTION</scope>
    <scope>CATALYTIC ACTIVITY</scope>
    <scope>BIOPHYSICOCHEMICAL PROPERTIES</scope>
    <scope>ACTIVITY REGULATION</scope>
    <scope>SUBCELLULAR LOCATION</scope>
    <source>
        <strain>ATCC 19992 / DSM 20077 / CIP 103699 / JCM 1130 / KCTC 3162 / NCIMB 13081 / WDCM 00103 / F164</strain>
    </source>
</reference>
<dbReference type="EC" id="2.4.1.10" evidence="5"/>
<dbReference type="EMBL" id="GU166815">
    <property type="protein sequence ID" value="ACZ67287.1"/>
    <property type="molecule type" value="Genomic_DNA"/>
</dbReference>
<dbReference type="SMR" id="D3WYW0"/>
<dbReference type="CAZy" id="GH68">
    <property type="family name" value="Glycoside Hydrolase Family 68"/>
</dbReference>
<dbReference type="GO" id="GO:0009986">
    <property type="term" value="C:cell surface"/>
    <property type="evidence" value="ECO:0007669"/>
    <property type="project" value="UniProtKB-SubCell"/>
</dbReference>
<dbReference type="GO" id="GO:0005576">
    <property type="term" value="C:extracellular region"/>
    <property type="evidence" value="ECO:0007669"/>
    <property type="project" value="UniProtKB-KW"/>
</dbReference>
<dbReference type="GO" id="GO:0050053">
    <property type="term" value="F:levansucrase activity"/>
    <property type="evidence" value="ECO:0007669"/>
    <property type="project" value="UniProtKB-EC"/>
</dbReference>
<dbReference type="GO" id="GO:0046872">
    <property type="term" value="F:metal ion binding"/>
    <property type="evidence" value="ECO:0007669"/>
    <property type="project" value="UniProtKB-KW"/>
</dbReference>
<dbReference type="GO" id="GO:0009758">
    <property type="term" value="P:carbohydrate utilization"/>
    <property type="evidence" value="ECO:0007669"/>
    <property type="project" value="InterPro"/>
</dbReference>
<dbReference type="CDD" id="cd08997">
    <property type="entry name" value="GH68"/>
    <property type="match status" value="1"/>
</dbReference>
<dbReference type="Gene3D" id="2.115.10.20">
    <property type="entry name" value="Glycosyl hydrolase domain, family 43"/>
    <property type="match status" value="1"/>
</dbReference>
<dbReference type="InterPro" id="IPR003469">
    <property type="entry name" value="Glyco_hydro_68"/>
</dbReference>
<dbReference type="InterPro" id="IPR023296">
    <property type="entry name" value="Glyco_hydro_beta-prop_sf"/>
</dbReference>
<dbReference type="InterPro" id="IPR019931">
    <property type="entry name" value="LPXTG_anchor"/>
</dbReference>
<dbReference type="NCBIfam" id="TIGR01167">
    <property type="entry name" value="LPXTG_anchor"/>
    <property type="match status" value="1"/>
</dbReference>
<dbReference type="Pfam" id="PF02435">
    <property type="entry name" value="Glyco_hydro_68"/>
    <property type="match status" value="1"/>
</dbReference>
<dbReference type="Pfam" id="PF00746">
    <property type="entry name" value="Gram_pos_anchor"/>
    <property type="match status" value="1"/>
</dbReference>
<dbReference type="SUPFAM" id="SSF75005">
    <property type="entry name" value="Arabinanase/levansucrase/invertase"/>
    <property type="match status" value="1"/>
</dbReference>
<dbReference type="PROSITE" id="PS50847">
    <property type="entry name" value="GRAM_POS_ANCHORING"/>
    <property type="match status" value="1"/>
</dbReference>
<feature type="signal peptide" evidence="2">
    <location>
        <begin position="1"/>
        <end position="36"/>
    </location>
</feature>
<feature type="chain" id="PRO_0000431243" description="Levansucrase" evidence="2">
    <location>
        <begin position="37"/>
        <end position="735"/>
    </location>
</feature>
<feature type="propeptide" id="PRO_0000431244" description="Removed by sortase" evidence="3">
    <location>
        <begin position="736"/>
        <end position="768"/>
    </location>
</feature>
<feature type="region of interest" description="Disordered" evidence="4">
    <location>
        <begin position="57"/>
        <end position="158"/>
    </location>
</feature>
<feature type="region of interest" description="Disordered" evidence="4">
    <location>
        <begin position="688"/>
        <end position="736"/>
    </location>
</feature>
<feature type="short sequence motif" description="LPXTG sorting signal" evidence="3">
    <location>
        <begin position="732"/>
        <end position="736"/>
    </location>
</feature>
<feature type="compositionally biased region" description="Polar residues" evidence="4">
    <location>
        <begin position="57"/>
        <end position="68"/>
    </location>
</feature>
<feature type="compositionally biased region" description="Polar residues" evidence="4">
    <location>
        <begin position="80"/>
        <end position="99"/>
    </location>
</feature>
<feature type="compositionally biased region" description="Polar residues" evidence="4">
    <location>
        <begin position="106"/>
        <end position="134"/>
    </location>
</feature>
<feature type="compositionally biased region" description="Polar residues" evidence="4">
    <location>
        <begin position="143"/>
        <end position="153"/>
    </location>
</feature>
<feature type="compositionally biased region" description="Low complexity" evidence="4">
    <location>
        <begin position="691"/>
        <end position="727"/>
    </location>
</feature>
<feature type="active site" description="Nucleophile" evidence="1">
    <location>
        <position position="251"/>
    </location>
</feature>
<feature type="active site" description="Proton donor/acceptor" evidence="1">
    <location>
        <position position="505"/>
    </location>
</feature>
<feature type="binding site" evidence="1">
    <location>
        <position position="250"/>
    </location>
    <ligand>
        <name>sucrose</name>
        <dbReference type="ChEBI" id="CHEBI:17992"/>
    </ligand>
</feature>
<feature type="binding site" evidence="1">
    <location>
        <position position="251"/>
    </location>
    <ligand>
        <name>sucrose</name>
        <dbReference type="ChEBI" id="CHEBI:17992"/>
    </ligand>
</feature>
<feature type="binding site" evidence="1">
    <location>
        <position position="320"/>
    </location>
    <ligand>
        <name>sucrose</name>
        <dbReference type="ChEBI" id="CHEBI:17992"/>
    </ligand>
</feature>
<feature type="binding site" evidence="1">
    <location>
        <position position="398"/>
    </location>
    <ligand>
        <name>Ca(2+)</name>
        <dbReference type="ChEBI" id="CHEBI:29108"/>
    </ligand>
</feature>
<feature type="binding site" evidence="1">
    <location>
        <position position="403"/>
    </location>
    <ligand>
        <name>sucrose</name>
        <dbReference type="ChEBI" id="CHEBI:17992"/>
    </ligand>
</feature>
<feature type="binding site" evidence="1">
    <location>
        <position position="404"/>
    </location>
    <ligand>
        <name>sucrose</name>
        <dbReference type="ChEBI" id="CHEBI:17992"/>
    </ligand>
</feature>
<feature type="binding site" evidence="1">
    <location>
        <position position="429"/>
    </location>
    <ligand>
        <name>Ca(2+)</name>
        <dbReference type="ChEBI" id="CHEBI:29108"/>
    </ligand>
</feature>
<feature type="binding site" evidence="1">
    <location>
        <position position="468"/>
    </location>
    <ligand>
        <name>Ca(2+)</name>
        <dbReference type="ChEBI" id="CHEBI:29108"/>
    </ligand>
</feature>
<feature type="binding site" evidence="1">
    <location>
        <position position="502"/>
    </location>
    <ligand>
        <name>Ca(2+)</name>
        <dbReference type="ChEBI" id="CHEBI:29108"/>
    </ligand>
</feature>
<feature type="binding site" evidence="1">
    <location>
        <position position="503"/>
    </location>
    <ligand>
        <name>sucrose</name>
        <dbReference type="ChEBI" id="CHEBI:17992"/>
    </ligand>
</feature>
<feature type="binding site" evidence="1">
    <location>
        <position position="523"/>
    </location>
    <ligand>
        <name>sucrose</name>
        <dbReference type="ChEBI" id="CHEBI:17992"/>
    </ligand>
</feature>
<feature type="site" description="Transition state stabilizer" evidence="1">
    <location>
        <position position="404"/>
    </location>
</feature>
<feature type="modified residue" description="Pentaglycyl murein peptidoglycan amidated alanine" evidence="3">
    <location>
        <position position="735"/>
    </location>
</feature>
<accession>D3WYW0</accession>
<protein>
    <recommendedName>
        <fullName evidence="6">Levansucrase</fullName>
        <ecNumber evidence="5">2.4.1.10</ecNumber>
    </recommendedName>
</protein>
<name>LSC_LACGS</name>
<organism>
    <name type="scientific">Lactobacillus gasseri</name>
    <dbReference type="NCBI Taxonomy" id="1596"/>
    <lineage>
        <taxon>Bacteria</taxon>
        <taxon>Bacillati</taxon>
        <taxon>Bacillota</taxon>
        <taxon>Bacilli</taxon>
        <taxon>Lactobacillales</taxon>
        <taxon>Lactobacillaceae</taxon>
        <taxon>Lactobacillus</taxon>
    </lineage>
</organism>
<keyword id="KW-0106">Calcium</keyword>
<keyword id="KW-0119">Carbohydrate metabolism</keyword>
<keyword id="KW-0134">Cell wall</keyword>
<keyword id="KW-0328">Glycosyltransferase</keyword>
<keyword id="KW-0479">Metal-binding</keyword>
<keyword id="KW-0572">Peptidoglycan-anchor</keyword>
<keyword id="KW-0964">Secreted</keyword>
<keyword id="KW-0732">Signal</keyword>
<keyword id="KW-0808">Transferase</keyword>
<evidence type="ECO:0000250" key="1">
    <source>
        <dbReference type="UniProtKB" id="P05655"/>
    </source>
</evidence>
<evidence type="ECO:0000255" key="2"/>
<evidence type="ECO:0000255" key="3">
    <source>
        <dbReference type="PROSITE-ProRule" id="PRU00477"/>
    </source>
</evidence>
<evidence type="ECO:0000256" key="4">
    <source>
        <dbReference type="SAM" id="MobiDB-lite"/>
    </source>
</evidence>
<evidence type="ECO:0000269" key="5">
    <source>
    </source>
</evidence>
<evidence type="ECO:0000303" key="6">
    <source>
    </source>
</evidence>
<evidence type="ECO:0000305" key="7"/>
<proteinExistence type="evidence at protein level"/>